<proteinExistence type="predicted"/>
<feature type="chain" id="PRO_0000065211" description="Uncharacterized protein C30G12.4">
    <location>
        <begin position="1"/>
        <end position="258"/>
    </location>
</feature>
<dbReference type="EMBL" id="FO080733">
    <property type="protein sequence ID" value="CCD66259.1"/>
    <property type="molecule type" value="Genomic_DNA"/>
</dbReference>
<dbReference type="PIR" id="T15712">
    <property type="entry name" value="T15712"/>
</dbReference>
<dbReference type="RefSeq" id="NP_495517.2">
    <property type="nucleotide sequence ID" value="NM_063116.4"/>
</dbReference>
<dbReference type="FunCoup" id="Q09257">
    <property type="interactions" value="1554"/>
</dbReference>
<dbReference type="STRING" id="6239.C30G12.4.1"/>
<dbReference type="PaxDb" id="6239-C30G12.4"/>
<dbReference type="EnsemblMetazoa" id="C30G12.4.1">
    <property type="protein sequence ID" value="C30G12.4.1"/>
    <property type="gene ID" value="WBGene00016276"/>
</dbReference>
<dbReference type="GeneID" id="183062"/>
<dbReference type="KEGG" id="cel:CELE_C30G12.4"/>
<dbReference type="UCSC" id="C30G12.4">
    <property type="organism name" value="c. elegans"/>
</dbReference>
<dbReference type="AGR" id="WB:WBGene00016276"/>
<dbReference type="CTD" id="183062"/>
<dbReference type="WormBase" id="C30G12.4">
    <property type="protein sequence ID" value="CE52092"/>
    <property type="gene ID" value="WBGene00016276"/>
</dbReference>
<dbReference type="eggNOG" id="ENOG502THWC">
    <property type="taxonomic scope" value="Eukaryota"/>
</dbReference>
<dbReference type="HOGENOM" id="CLU_1078619_0_0_1"/>
<dbReference type="InParanoid" id="Q09257"/>
<dbReference type="OrthoDB" id="5834609at2759"/>
<dbReference type="PRO" id="PR:Q09257"/>
<dbReference type="Proteomes" id="UP000001940">
    <property type="component" value="Chromosome II"/>
</dbReference>
<dbReference type="Bgee" id="WBGene00016276">
    <property type="expression patterns" value="Expressed in embryo and 4 other cell types or tissues"/>
</dbReference>
<dbReference type="InterPro" id="IPR002601">
    <property type="entry name" value="C6_domain"/>
</dbReference>
<dbReference type="PANTHER" id="PTHR21629">
    <property type="entry name" value="C6 DOMAIN-CONTAINING PROTEIN"/>
    <property type="match status" value="1"/>
</dbReference>
<dbReference type="PANTHER" id="PTHR21629:SF4">
    <property type="entry name" value="PROTEIN CBG13119"/>
    <property type="match status" value="1"/>
</dbReference>
<dbReference type="SMART" id="SM01048">
    <property type="entry name" value="C6"/>
    <property type="match status" value="1"/>
</dbReference>
<reference key="1">
    <citation type="journal article" date="1998" name="Science">
        <title>Genome sequence of the nematode C. elegans: a platform for investigating biology.</title>
        <authorList>
            <consortium name="The C. elegans sequencing consortium"/>
        </authorList>
    </citation>
    <scope>NUCLEOTIDE SEQUENCE [LARGE SCALE GENOMIC DNA]</scope>
    <source>
        <strain>Bristol N2</strain>
    </source>
</reference>
<accession>Q09257</accession>
<gene>
    <name type="ORF">C30G12.4</name>
</gene>
<organism>
    <name type="scientific">Caenorhabditis elegans</name>
    <dbReference type="NCBI Taxonomy" id="6239"/>
    <lineage>
        <taxon>Eukaryota</taxon>
        <taxon>Metazoa</taxon>
        <taxon>Ecdysozoa</taxon>
        <taxon>Nematoda</taxon>
        <taxon>Chromadorea</taxon>
        <taxon>Rhabditida</taxon>
        <taxon>Rhabditina</taxon>
        <taxon>Rhabditomorpha</taxon>
        <taxon>Rhabditoidea</taxon>
        <taxon>Rhabditidae</taxon>
        <taxon>Peloderinae</taxon>
        <taxon>Caenorhabditis</taxon>
    </lineage>
</organism>
<sequence>MCRVFTYIHTSAVRLSALGASRESTFFKSRTALIHTVNVANFHVSRQNCRRCLDASRHCFSTRSRTEERLLLQLSIPFLHQISPKPACPPSSLNSHSFECCSLTFSYSYMMVSCKLLLYYGTFSSIISIVLSCVATSPTGTVTTTVAPTTTTAATGCTSCTASQVTFAQSGGGVQIDTAGIPGTAAGCLTLTLTCTAGTGNYAFMQFNNNQGGPAENQDMGMTINALANCVDGNWVYTSGGVSRIVTQVSCNQAPNAG</sequence>
<keyword id="KW-1185">Reference proteome</keyword>
<name>YQB4_CAEEL</name>
<protein>
    <recommendedName>
        <fullName>Uncharacterized protein C30G12.4</fullName>
    </recommendedName>
</protein>